<name>RS10_CORU7</name>
<organism>
    <name type="scientific">Corynebacterium urealyticum (strain ATCC 43042 / DSM 7109)</name>
    <dbReference type="NCBI Taxonomy" id="504474"/>
    <lineage>
        <taxon>Bacteria</taxon>
        <taxon>Bacillati</taxon>
        <taxon>Actinomycetota</taxon>
        <taxon>Actinomycetes</taxon>
        <taxon>Mycobacteriales</taxon>
        <taxon>Corynebacteriaceae</taxon>
        <taxon>Corynebacterium</taxon>
    </lineage>
</organism>
<feature type="chain" id="PRO_1000127109" description="Small ribosomal subunit protein uS10">
    <location>
        <begin position="1"/>
        <end position="101"/>
    </location>
</feature>
<gene>
    <name evidence="1" type="primary">rpsJ</name>
    <name type="ordered locus">cu0314</name>
</gene>
<sequence length="101" mass="11426">MAGQKIRIRLKAYDHEAIDASAKKIVETVTRTGARVVGPVPLPTEKNVYCVIRSPHKDKDSREHFEMRTHKRLIDILDPTPKTVDALMRIDLPASVDVNIQ</sequence>
<reference key="1">
    <citation type="journal article" date="2008" name="J. Biotechnol.">
        <title>The lifestyle of Corynebacterium urealyticum derived from its complete genome sequence established by pyrosequencing.</title>
        <authorList>
            <person name="Tauch A."/>
            <person name="Trost E."/>
            <person name="Tilker A."/>
            <person name="Ludewig U."/>
            <person name="Schneiker S."/>
            <person name="Goesmann A."/>
            <person name="Arnold W."/>
            <person name="Bekel T."/>
            <person name="Brinkrolf K."/>
            <person name="Brune I."/>
            <person name="Goetker S."/>
            <person name="Kalinowski J."/>
            <person name="Kamp P.-B."/>
            <person name="Lobo F.P."/>
            <person name="Viehoever P."/>
            <person name="Weisshaar B."/>
            <person name="Soriano F."/>
            <person name="Droege M."/>
            <person name="Puehler A."/>
        </authorList>
    </citation>
    <scope>NUCLEOTIDE SEQUENCE [LARGE SCALE GENOMIC DNA]</scope>
    <source>
        <strain>ATCC 43042 / DSM 7109</strain>
    </source>
</reference>
<dbReference type="EMBL" id="AM942444">
    <property type="protein sequence ID" value="CAQ04274.1"/>
    <property type="molecule type" value="Genomic_DNA"/>
</dbReference>
<dbReference type="RefSeq" id="WP_005291986.1">
    <property type="nucleotide sequence ID" value="NC_010545.1"/>
</dbReference>
<dbReference type="SMR" id="B1VET5"/>
<dbReference type="STRING" id="504474.cu0314"/>
<dbReference type="GeneID" id="92739457"/>
<dbReference type="KEGG" id="cur:cu0314"/>
<dbReference type="eggNOG" id="COG0051">
    <property type="taxonomic scope" value="Bacteria"/>
</dbReference>
<dbReference type="HOGENOM" id="CLU_122625_1_3_11"/>
<dbReference type="Proteomes" id="UP000001727">
    <property type="component" value="Chromosome"/>
</dbReference>
<dbReference type="GO" id="GO:1990904">
    <property type="term" value="C:ribonucleoprotein complex"/>
    <property type="evidence" value="ECO:0007669"/>
    <property type="project" value="UniProtKB-KW"/>
</dbReference>
<dbReference type="GO" id="GO:0005840">
    <property type="term" value="C:ribosome"/>
    <property type="evidence" value="ECO:0007669"/>
    <property type="project" value="UniProtKB-KW"/>
</dbReference>
<dbReference type="GO" id="GO:0003735">
    <property type="term" value="F:structural constituent of ribosome"/>
    <property type="evidence" value="ECO:0007669"/>
    <property type="project" value="InterPro"/>
</dbReference>
<dbReference type="GO" id="GO:0000049">
    <property type="term" value="F:tRNA binding"/>
    <property type="evidence" value="ECO:0007669"/>
    <property type="project" value="UniProtKB-UniRule"/>
</dbReference>
<dbReference type="GO" id="GO:0006412">
    <property type="term" value="P:translation"/>
    <property type="evidence" value="ECO:0007669"/>
    <property type="project" value="UniProtKB-UniRule"/>
</dbReference>
<dbReference type="FunFam" id="3.30.70.600:FF:000001">
    <property type="entry name" value="30S ribosomal protein S10"/>
    <property type="match status" value="1"/>
</dbReference>
<dbReference type="Gene3D" id="3.30.70.600">
    <property type="entry name" value="Ribosomal protein S10 domain"/>
    <property type="match status" value="1"/>
</dbReference>
<dbReference type="HAMAP" id="MF_00508">
    <property type="entry name" value="Ribosomal_uS10"/>
    <property type="match status" value="1"/>
</dbReference>
<dbReference type="InterPro" id="IPR001848">
    <property type="entry name" value="Ribosomal_uS10"/>
</dbReference>
<dbReference type="InterPro" id="IPR018268">
    <property type="entry name" value="Ribosomal_uS10_CS"/>
</dbReference>
<dbReference type="InterPro" id="IPR027486">
    <property type="entry name" value="Ribosomal_uS10_dom"/>
</dbReference>
<dbReference type="InterPro" id="IPR036838">
    <property type="entry name" value="Ribosomal_uS10_dom_sf"/>
</dbReference>
<dbReference type="NCBIfam" id="NF001861">
    <property type="entry name" value="PRK00596.1"/>
    <property type="match status" value="1"/>
</dbReference>
<dbReference type="NCBIfam" id="TIGR01049">
    <property type="entry name" value="rpsJ_bact"/>
    <property type="match status" value="1"/>
</dbReference>
<dbReference type="PANTHER" id="PTHR11700">
    <property type="entry name" value="30S RIBOSOMAL PROTEIN S10 FAMILY MEMBER"/>
    <property type="match status" value="1"/>
</dbReference>
<dbReference type="Pfam" id="PF00338">
    <property type="entry name" value="Ribosomal_S10"/>
    <property type="match status" value="1"/>
</dbReference>
<dbReference type="PRINTS" id="PR00971">
    <property type="entry name" value="RIBOSOMALS10"/>
</dbReference>
<dbReference type="SMART" id="SM01403">
    <property type="entry name" value="Ribosomal_S10"/>
    <property type="match status" value="1"/>
</dbReference>
<dbReference type="SUPFAM" id="SSF54999">
    <property type="entry name" value="Ribosomal protein S10"/>
    <property type="match status" value="1"/>
</dbReference>
<dbReference type="PROSITE" id="PS00361">
    <property type="entry name" value="RIBOSOMAL_S10"/>
    <property type="match status" value="1"/>
</dbReference>
<proteinExistence type="inferred from homology"/>
<accession>B1VET5</accession>
<comment type="function">
    <text evidence="1">Involved in the binding of tRNA to the ribosomes.</text>
</comment>
<comment type="subunit">
    <text evidence="1">Part of the 30S ribosomal subunit.</text>
</comment>
<comment type="similarity">
    <text evidence="1">Belongs to the universal ribosomal protein uS10 family.</text>
</comment>
<evidence type="ECO:0000255" key="1">
    <source>
        <dbReference type="HAMAP-Rule" id="MF_00508"/>
    </source>
</evidence>
<evidence type="ECO:0000305" key="2"/>
<keyword id="KW-1185">Reference proteome</keyword>
<keyword id="KW-0687">Ribonucleoprotein</keyword>
<keyword id="KW-0689">Ribosomal protein</keyword>
<protein>
    <recommendedName>
        <fullName evidence="1">Small ribosomal subunit protein uS10</fullName>
    </recommendedName>
    <alternativeName>
        <fullName evidence="2">30S ribosomal protein S10</fullName>
    </alternativeName>
</protein>